<reference key="1">
    <citation type="journal article" date="2000" name="Nucleic Acids Res.">
        <title>Complete genome sequence of the alkaliphilic bacterium Bacillus halodurans and genomic sequence comparison with Bacillus subtilis.</title>
        <authorList>
            <person name="Takami H."/>
            <person name="Nakasone K."/>
            <person name="Takaki Y."/>
            <person name="Maeno G."/>
            <person name="Sasaki R."/>
            <person name="Masui N."/>
            <person name="Fuji F."/>
            <person name="Hirama C."/>
            <person name="Nakamura Y."/>
            <person name="Ogasawara N."/>
            <person name="Kuhara S."/>
            <person name="Horikoshi K."/>
        </authorList>
    </citation>
    <scope>NUCLEOTIDE SEQUENCE [LARGE SCALE GENOMIC DNA]</scope>
    <source>
        <strain>ATCC BAA-125 / DSM 18197 / FERM 7344 / JCM 9153 / C-125</strain>
    </source>
</reference>
<comment type="function">
    <text evidence="2">Responsible for the release of ribosomes from messenger RNA at the termination of protein biosynthesis. May increase the efficiency of translation by recycling ribosomes from one round of translation to another.</text>
</comment>
<comment type="subcellular location">
    <subcellularLocation>
        <location evidence="2">Cytoplasm</location>
    </subcellularLocation>
</comment>
<comment type="similarity">
    <text evidence="2">Belongs to the RRF family.</text>
</comment>
<accession>Q9KA66</accession>
<organism>
    <name type="scientific">Halalkalibacterium halodurans (strain ATCC BAA-125 / DSM 18197 / FERM 7344 / JCM 9153 / C-125)</name>
    <name type="common">Bacillus halodurans</name>
    <dbReference type="NCBI Taxonomy" id="272558"/>
    <lineage>
        <taxon>Bacteria</taxon>
        <taxon>Bacillati</taxon>
        <taxon>Bacillota</taxon>
        <taxon>Bacilli</taxon>
        <taxon>Bacillales</taxon>
        <taxon>Bacillaceae</taxon>
        <taxon>Halalkalibacterium (ex Joshi et al. 2022)</taxon>
    </lineage>
</organism>
<dbReference type="EMBL" id="BA000004">
    <property type="protein sequence ID" value="BAB06143.1"/>
    <property type="molecule type" value="Genomic_DNA"/>
</dbReference>
<dbReference type="PIR" id="H83952">
    <property type="entry name" value="H83952"/>
</dbReference>
<dbReference type="RefSeq" id="WP_010898577.1">
    <property type="nucleotide sequence ID" value="NC_002570.2"/>
</dbReference>
<dbReference type="SMR" id="Q9KA66"/>
<dbReference type="STRING" id="272558.gene:10728322"/>
<dbReference type="GeneID" id="87597944"/>
<dbReference type="KEGG" id="bha:BH2424"/>
<dbReference type="eggNOG" id="COG0233">
    <property type="taxonomic scope" value="Bacteria"/>
</dbReference>
<dbReference type="HOGENOM" id="CLU_073981_2_0_9"/>
<dbReference type="OrthoDB" id="9804006at2"/>
<dbReference type="Proteomes" id="UP000001258">
    <property type="component" value="Chromosome"/>
</dbReference>
<dbReference type="GO" id="GO:0005737">
    <property type="term" value="C:cytoplasm"/>
    <property type="evidence" value="ECO:0007669"/>
    <property type="project" value="UniProtKB-SubCell"/>
</dbReference>
<dbReference type="GO" id="GO:0043023">
    <property type="term" value="F:ribosomal large subunit binding"/>
    <property type="evidence" value="ECO:0007669"/>
    <property type="project" value="TreeGrafter"/>
</dbReference>
<dbReference type="GO" id="GO:0006415">
    <property type="term" value="P:translational termination"/>
    <property type="evidence" value="ECO:0007669"/>
    <property type="project" value="UniProtKB-UniRule"/>
</dbReference>
<dbReference type="CDD" id="cd00520">
    <property type="entry name" value="RRF"/>
    <property type="match status" value="1"/>
</dbReference>
<dbReference type="FunFam" id="1.10.132.20:FF:000001">
    <property type="entry name" value="Ribosome-recycling factor"/>
    <property type="match status" value="1"/>
</dbReference>
<dbReference type="FunFam" id="3.30.1360.40:FF:000001">
    <property type="entry name" value="Ribosome-recycling factor"/>
    <property type="match status" value="1"/>
</dbReference>
<dbReference type="Gene3D" id="3.30.1360.40">
    <property type="match status" value="1"/>
</dbReference>
<dbReference type="Gene3D" id="1.10.132.20">
    <property type="entry name" value="Ribosome-recycling factor"/>
    <property type="match status" value="1"/>
</dbReference>
<dbReference type="HAMAP" id="MF_00040">
    <property type="entry name" value="RRF"/>
    <property type="match status" value="1"/>
</dbReference>
<dbReference type="InterPro" id="IPR002661">
    <property type="entry name" value="Ribosome_recyc_fac"/>
</dbReference>
<dbReference type="InterPro" id="IPR023584">
    <property type="entry name" value="Ribosome_recyc_fac_dom"/>
</dbReference>
<dbReference type="InterPro" id="IPR036191">
    <property type="entry name" value="RRF_sf"/>
</dbReference>
<dbReference type="NCBIfam" id="TIGR00496">
    <property type="entry name" value="frr"/>
    <property type="match status" value="1"/>
</dbReference>
<dbReference type="PANTHER" id="PTHR20982:SF3">
    <property type="entry name" value="MITOCHONDRIAL RIBOSOME RECYCLING FACTOR PSEUDO 1"/>
    <property type="match status" value="1"/>
</dbReference>
<dbReference type="PANTHER" id="PTHR20982">
    <property type="entry name" value="RIBOSOME RECYCLING FACTOR"/>
    <property type="match status" value="1"/>
</dbReference>
<dbReference type="Pfam" id="PF01765">
    <property type="entry name" value="RRF"/>
    <property type="match status" value="1"/>
</dbReference>
<dbReference type="SUPFAM" id="SSF55194">
    <property type="entry name" value="Ribosome recycling factor, RRF"/>
    <property type="match status" value="1"/>
</dbReference>
<proteinExistence type="inferred from homology"/>
<gene>
    <name evidence="2" type="primary">frr</name>
    <name type="ordered locus">BH2424</name>
</gene>
<keyword id="KW-0963">Cytoplasm</keyword>
<keyword id="KW-0648">Protein biosynthesis</keyword>
<keyword id="KW-1185">Reference proteome</keyword>
<feature type="initiator methionine" description="Removed" evidence="1">
    <location>
        <position position="1"/>
    </location>
</feature>
<feature type="chain" id="PRO_0000167408" description="Ribosome-recycling factor">
    <location>
        <begin position="2"/>
        <end position="185"/>
    </location>
</feature>
<sequence length="185" mass="20987">MSKEVLNDAEQRMTKATEALGRELAKLRAGRANPAMLDRITVEYYGAETPLNQLATISVPEARLLVIQPFDKSSISDIERAIQKSDLGLTPSNDGTVIRITIPPLTEERRRDLTKLVKKSAEEAKVAVRNIRRDANDDLKKRQKDGELTEDDLRRVTEDVQKLTDKYIEQIDQKAEAKEKEIMEV</sequence>
<evidence type="ECO:0000250" key="1"/>
<evidence type="ECO:0000255" key="2">
    <source>
        <dbReference type="HAMAP-Rule" id="MF_00040"/>
    </source>
</evidence>
<protein>
    <recommendedName>
        <fullName evidence="2">Ribosome-recycling factor</fullName>
        <shortName evidence="2">RRF</shortName>
    </recommendedName>
    <alternativeName>
        <fullName evidence="2">Ribosome-releasing factor</fullName>
    </alternativeName>
</protein>
<name>RRF_HALH5</name>